<proteinExistence type="inferred from homology"/>
<evidence type="ECO:0000255" key="1">
    <source>
        <dbReference type="HAMAP-Rule" id="MF_01358"/>
    </source>
</evidence>
<reference key="1">
    <citation type="journal article" date="2003" name="J. Bacteriol.">
        <title>Complete genome sequence of the ammonia-oxidizing bacterium and obligate chemolithoautotroph Nitrosomonas europaea.</title>
        <authorList>
            <person name="Chain P."/>
            <person name="Lamerdin J.E."/>
            <person name="Larimer F.W."/>
            <person name="Regala W."/>
            <person name="Lao V."/>
            <person name="Land M.L."/>
            <person name="Hauser L."/>
            <person name="Hooper A.B."/>
            <person name="Klotz M.G."/>
            <person name="Norton J."/>
            <person name="Sayavedra-Soto L.A."/>
            <person name="Arciero D.M."/>
            <person name="Hommes N.G."/>
            <person name="Whittaker M.M."/>
            <person name="Arp D.J."/>
        </authorList>
    </citation>
    <scope>NUCLEOTIDE SEQUENCE [LARGE SCALE GENOMIC DNA]</scope>
    <source>
        <strain>ATCC 19718 / CIP 103999 / KCTC 2705 / NBRC 14298</strain>
    </source>
</reference>
<accession>Q82TU6</accession>
<organism>
    <name type="scientific">Nitrosomonas europaea (strain ATCC 19718 / CIP 103999 / KCTC 2705 / NBRC 14298)</name>
    <dbReference type="NCBI Taxonomy" id="228410"/>
    <lineage>
        <taxon>Bacteria</taxon>
        <taxon>Pseudomonadati</taxon>
        <taxon>Pseudomonadota</taxon>
        <taxon>Betaproteobacteria</taxon>
        <taxon>Nitrosomonadales</taxon>
        <taxon>Nitrosomonadaceae</taxon>
        <taxon>Nitrosomonas</taxon>
    </lineage>
</organism>
<sequence>MAEIRNYTMNFGPQHPAAHGVLRLVMELDGEVIRRADPHIGLLHRATEKLAENKTYVQSVPYMDRLDYVSMMVNEHAYVMAIEKLLQIEVPIRAQYIRVMFDEITRILNHLLWLGAHALDVGAMTVFLYAFREREDLMDCYEAVSGARLHAAYYRPGGVYRDLPDNMPQYQPSAIHDEKATRARNENRQGSLLDFIEDFTRRFPGYIDDYEALLTDNRIWKQRLVDIGVVSPDRAKALGFTGPMLRGSGVEWDLRKKQPYEVYDQVDFDIPVGANGDCYDRYLVRIEEMRQSNHIIKQCVEWLRKNPGPVITDNHKVAPPSRLAMKQNMEEMIHHFKLFTEGMHVPRGEAYAAVEHPKGEFGIYIVSDGANKPYRLKIRAPGFAHLAALDEMTKGHMIADLVAIIGTQDIVFGEIDR</sequence>
<comment type="function">
    <text evidence="1">NDH-1 shuttles electrons from NADH, via FMN and iron-sulfur (Fe-S) centers, to quinones in the respiratory chain. The immediate electron acceptor for the enzyme in this species is believed to be ubiquinone. Couples the redox reaction to proton translocation (for every two electrons transferred, four hydrogen ions are translocated across the cytoplasmic membrane), and thus conserves the redox energy in a proton gradient.</text>
</comment>
<comment type="catalytic activity">
    <reaction evidence="1">
        <text>a quinone + NADH + 5 H(+)(in) = a quinol + NAD(+) + 4 H(+)(out)</text>
        <dbReference type="Rhea" id="RHEA:57888"/>
        <dbReference type="ChEBI" id="CHEBI:15378"/>
        <dbReference type="ChEBI" id="CHEBI:24646"/>
        <dbReference type="ChEBI" id="CHEBI:57540"/>
        <dbReference type="ChEBI" id="CHEBI:57945"/>
        <dbReference type="ChEBI" id="CHEBI:132124"/>
    </reaction>
</comment>
<comment type="subunit">
    <text evidence="1">NDH-1 is composed of 14 different subunits. Subunits NuoB, C, D, E, F, and G constitute the peripheral sector of the complex.</text>
</comment>
<comment type="subcellular location">
    <subcellularLocation>
        <location evidence="1">Cell inner membrane</location>
        <topology evidence="1">Peripheral membrane protein</topology>
        <orientation evidence="1">Cytoplasmic side</orientation>
    </subcellularLocation>
</comment>
<comment type="similarity">
    <text evidence="1">Belongs to the complex I 49 kDa subunit family.</text>
</comment>
<dbReference type="EC" id="7.1.1.-" evidence="1"/>
<dbReference type="EMBL" id="AL954747">
    <property type="protein sequence ID" value="CAD85685.1"/>
    <property type="molecule type" value="Genomic_DNA"/>
</dbReference>
<dbReference type="RefSeq" id="WP_011112325.1">
    <property type="nucleotide sequence ID" value="NC_004757.1"/>
</dbReference>
<dbReference type="SMR" id="Q82TU6"/>
<dbReference type="STRING" id="228410.NE1774"/>
<dbReference type="GeneID" id="87104935"/>
<dbReference type="KEGG" id="neu:NE1774"/>
<dbReference type="eggNOG" id="COG0649">
    <property type="taxonomic scope" value="Bacteria"/>
</dbReference>
<dbReference type="HOGENOM" id="CLU_015134_1_1_4"/>
<dbReference type="OrthoDB" id="9801496at2"/>
<dbReference type="PhylomeDB" id="Q82TU6"/>
<dbReference type="Proteomes" id="UP000001416">
    <property type="component" value="Chromosome"/>
</dbReference>
<dbReference type="GO" id="GO:0005886">
    <property type="term" value="C:plasma membrane"/>
    <property type="evidence" value="ECO:0007669"/>
    <property type="project" value="UniProtKB-SubCell"/>
</dbReference>
<dbReference type="GO" id="GO:0051287">
    <property type="term" value="F:NAD binding"/>
    <property type="evidence" value="ECO:0007669"/>
    <property type="project" value="InterPro"/>
</dbReference>
<dbReference type="GO" id="GO:0050136">
    <property type="term" value="F:NADH:ubiquinone reductase (non-electrogenic) activity"/>
    <property type="evidence" value="ECO:0007669"/>
    <property type="project" value="UniProtKB-UniRule"/>
</dbReference>
<dbReference type="GO" id="GO:0048038">
    <property type="term" value="F:quinone binding"/>
    <property type="evidence" value="ECO:0007669"/>
    <property type="project" value="UniProtKB-KW"/>
</dbReference>
<dbReference type="FunFam" id="1.10.645.10:FF:000005">
    <property type="entry name" value="NADH-quinone oxidoreductase subunit D"/>
    <property type="match status" value="1"/>
</dbReference>
<dbReference type="Gene3D" id="1.10.645.10">
    <property type="entry name" value="Cytochrome-c3 Hydrogenase, chain B"/>
    <property type="match status" value="1"/>
</dbReference>
<dbReference type="HAMAP" id="MF_01358">
    <property type="entry name" value="NDH1_NuoD"/>
    <property type="match status" value="1"/>
</dbReference>
<dbReference type="InterPro" id="IPR001135">
    <property type="entry name" value="NADH_Q_OxRdtase_suD"/>
</dbReference>
<dbReference type="InterPro" id="IPR014029">
    <property type="entry name" value="NADH_UbQ_OxRdtase_49kDa_CS"/>
</dbReference>
<dbReference type="InterPro" id="IPR022885">
    <property type="entry name" value="NDH1_su_D/H"/>
</dbReference>
<dbReference type="InterPro" id="IPR029014">
    <property type="entry name" value="NiFe-Hase_large"/>
</dbReference>
<dbReference type="NCBIfam" id="TIGR01962">
    <property type="entry name" value="NuoD"/>
    <property type="match status" value="1"/>
</dbReference>
<dbReference type="NCBIfam" id="NF004739">
    <property type="entry name" value="PRK06075.1"/>
    <property type="match status" value="1"/>
</dbReference>
<dbReference type="PANTHER" id="PTHR11993:SF10">
    <property type="entry name" value="NADH DEHYDROGENASE [UBIQUINONE] IRON-SULFUR PROTEIN 2, MITOCHONDRIAL"/>
    <property type="match status" value="1"/>
</dbReference>
<dbReference type="PANTHER" id="PTHR11993">
    <property type="entry name" value="NADH-UBIQUINONE OXIDOREDUCTASE 49 KDA SUBUNIT"/>
    <property type="match status" value="1"/>
</dbReference>
<dbReference type="Pfam" id="PF00346">
    <property type="entry name" value="Complex1_49kDa"/>
    <property type="match status" value="1"/>
</dbReference>
<dbReference type="SUPFAM" id="SSF56762">
    <property type="entry name" value="HydB/Nqo4-like"/>
    <property type="match status" value="1"/>
</dbReference>
<dbReference type="PROSITE" id="PS00535">
    <property type="entry name" value="COMPLEX1_49K"/>
    <property type="match status" value="1"/>
</dbReference>
<protein>
    <recommendedName>
        <fullName evidence="1">NADH-quinone oxidoreductase subunit D</fullName>
        <ecNumber evidence="1">7.1.1.-</ecNumber>
    </recommendedName>
    <alternativeName>
        <fullName evidence="1">NADH dehydrogenase I subunit D</fullName>
    </alternativeName>
    <alternativeName>
        <fullName evidence="1">NDH-1 subunit D</fullName>
    </alternativeName>
</protein>
<feature type="chain" id="PRO_0000371894" description="NADH-quinone oxidoreductase subunit D">
    <location>
        <begin position="1"/>
        <end position="417"/>
    </location>
</feature>
<keyword id="KW-0997">Cell inner membrane</keyword>
<keyword id="KW-1003">Cell membrane</keyword>
<keyword id="KW-0472">Membrane</keyword>
<keyword id="KW-0520">NAD</keyword>
<keyword id="KW-0874">Quinone</keyword>
<keyword id="KW-1185">Reference proteome</keyword>
<keyword id="KW-1278">Translocase</keyword>
<keyword id="KW-0813">Transport</keyword>
<keyword id="KW-0830">Ubiquinone</keyword>
<name>NUOD_NITEU</name>
<gene>
    <name evidence="1" type="primary">nuoD</name>
    <name type="ordered locus">NE1774</name>
</gene>